<organism>
    <name type="scientific">Trichodesmium erythraeum (strain IMS101)</name>
    <dbReference type="NCBI Taxonomy" id="203124"/>
    <lineage>
        <taxon>Bacteria</taxon>
        <taxon>Bacillati</taxon>
        <taxon>Cyanobacteriota</taxon>
        <taxon>Cyanophyceae</taxon>
        <taxon>Oscillatoriophycideae</taxon>
        <taxon>Oscillatoriales</taxon>
        <taxon>Microcoleaceae</taxon>
        <taxon>Trichodesmium</taxon>
    </lineage>
</organism>
<name>PSB28_TRIEI</name>
<dbReference type="EMBL" id="CP000393">
    <property type="protein sequence ID" value="ABG51626.1"/>
    <property type="status" value="ALT_INIT"/>
    <property type="molecule type" value="Genomic_DNA"/>
</dbReference>
<dbReference type="RefSeq" id="WP_155994681.1">
    <property type="nucleotide sequence ID" value="NC_008312.1"/>
</dbReference>
<dbReference type="SMR" id="Q112E8"/>
<dbReference type="STRING" id="203124.Tery_2408"/>
<dbReference type="KEGG" id="ter:Tery_2408"/>
<dbReference type="eggNOG" id="ENOG5031GDS">
    <property type="taxonomic scope" value="Bacteria"/>
</dbReference>
<dbReference type="HOGENOM" id="CLU_137323_1_0_3"/>
<dbReference type="OrthoDB" id="559598at2"/>
<dbReference type="GO" id="GO:0009654">
    <property type="term" value="C:photosystem II oxygen evolving complex"/>
    <property type="evidence" value="ECO:0007669"/>
    <property type="project" value="InterPro"/>
</dbReference>
<dbReference type="GO" id="GO:0031676">
    <property type="term" value="C:plasma membrane-derived thylakoid membrane"/>
    <property type="evidence" value="ECO:0007669"/>
    <property type="project" value="UniProtKB-SubCell"/>
</dbReference>
<dbReference type="GO" id="GO:0015979">
    <property type="term" value="P:photosynthesis"/>
    <property type="evidence" value="ECO:0007669"/>
    <property type="project" value="UniProtKB-UniRule"/>
</dbReference>
<dbReference type="Gene3D" id="2.40.30.220">
    <property type="entry name" value="Photosystem II Psb28"/>
    <property type="match status" value="1"/>
</dbReference>
<dbReference type="HAMAP" id="MF_01370">
    <property type="entry name" value="PSII_Psb28"/>
    <property type="match status" value="1"/>
</dbReference>
<dbReference type="InterPro" id="IPR038676">
    <property type="entry name" value="Psb28_c1_sf"/>
</dbReference>
<dbReference type="InterPro" id="IPR005610">
    <property type="entry name" value="PSII_Psb28_class-1"/>
</dbReference>
<dbReference type="NCBIfam" id="TIGR03047">
    <property type="entry name" value="PS_II_psb28"/>
    <property type="match status" value="1"/>
</dbReference>
<dbReference type="PANTHER" id="PTHR34963">
    <property type="match status" value="1"/>
</dbReference>
<dbReference type="PANTHER" id="PTHR34963:SF2">
    <property type="entry name" value="PHOTOSYSTEM II REACTION CENTER PSB28 PROTEIN, CHLOROPLASTIC"/>
    <property type="match status" value="1"/>
</dbReference>
<dbReference type="Pfam" id="PF03912">
    <property type="entry name" value="Psb28"/>
    <property type="match status" value="1"/>
</dbReference>
<keyword id="KW-0472">Membrane</keyword>
<keyword id="KW-0602">Photosynthesis</keyword>
<keyword id="KW-0604">Photosystem II</keyword>
<keyword id="KW-0793">Thylakoid</keyword>
<reference key="1">
    <citation type="journal article" date="2015" name="Proc. Natl. Acad. Sci. U.S.A.">
        <title>Trichodesmium genome maintains abundant, widespread noncoding DNA in situ, despite oligotrophic lifestyle.</title>
        <authorList>
            <person name="Walworth N."/>
            <person name="Pfreundt U."/>
            <person name="Nelson W.C."/>
            <person name="Mincer T."/>
            <person name="Heidelberg J.F."/>
            <person name="Fu F."/>
            <person name="Waterbury J.B."/>
            <person name="Glavina del Rio T."/>
            <person name="Goodwin L."/>
            <person name="Kyrpides N.C."/>
            <person name="Land M.L."/>
            <person name="Woyke T."/>
            <person name="Hutchins D.A."/>
            <person name="Hess W.R."/>
            <person name="Webb E.A."/>
        </authorList>
    </citation>
    <scope>NUCLEOTIDE SEQUENCE [LARGE SCALE GENOMIC DNA]</scope>
    <source>
        <strain>IMS101</strain>
    </source>
</reference>
<feature type="chain" id="PRO_0000271576" description="Photosystem II reaction center Psb28 protein">
    <location>
        <begin position="1"/>
        <end position="113"/>
    </location>
</feature>
<comment type="subunit">
    <text evidence="1">Part of the photosystem II complex.</text>
</comment>
<comment type="subcellular location">
    <subcellularLocation>
        <location evidence="1">Cellular thylakoid membrane</location>
        <topology evidence="1">Peripheral membrane protein</topology>
        <orientation evidence="1">Cytoplasmic side</orientation>
    </subcellularLocation>
</comment>
<comment type="similarity">
    <text evidence="1">Belongs to the Psb28 family.</text>
</comment>
<comment type="sequence caution" evidence="2">
    <conflict type="erroneous initiation">
        <sequence resource="EMBL-CDS" id="ABG51626"/>
    </conflict>
    <text>Extended N-terminus.</text>
</comment>
<proteinExistence type="inferred from homology"/>
<gene>
    <name evidence="1" type="primary">psb28</name>
    <name type="ordered locus">Tery_2408</name>
</gene>
<evidence type="ECO:0000255" key="1">
    <source>
        <dbReference type="HAMAP-Rule" id="MF_01370"/>
    </source>
</evidence>
<evidence type="ECO:0000305" key="2"/>
<accession>Q112E8</accession>
<sequence>MTTIQFIQGIDEEVTPEVRLTRSRSGNQGTATLIFEDPKALGQDVTQEITGMYMIDEEGQITSRDVKARFVNGQPKFLEGLYVMKTKQEWERFMRFMESYAKEHDLGFKKAKA</sequence>
<protein>
    <recommendedName>
        <fullName evidence="1">Photosystem II reaction center Psb28 protein</fullName>
    </recommendedName>
    <alternativeName>
        <fullName evidence="1">Photosystem II 13 kDa protein</fullName>
    </alternativeName>
    <alternativeName>
        <fullName evidence="1">Photosystem II reaction center W protein</fullName>
    </alternativeName>
</protein>